<feature type="initiator methionine" description="Removed" evidence="19">
    <location>
        <position position="1"/>
    </location>
</feature>
<feature type="chain" id="PRO_0000170910" description="Endonuclease 8-like 3">
    <location>
        <begin position="2"/>
        <end position="605"/>
    </location>
</feature>
<feature type="zinc finger region" description="FPG-type" evidence="4">
    <location>
        <begin position="247"/>
        <end position="281"/>
    </location>
</feature>
<feature type="zinc finger region" description="RanBP2-type" evidence="3">
    <location>
        <begin position="317"/>
        <end position="346"/>
    </location>
</feature>
<feature type="zinc finger region" description="GRF-type 1" evidence="6">
    <location>
        <begin position="507"/>
        <end position="550"/>
    </location>
</feature>
<feature type="zinc finger region" description="GRF-type 2" evidence="6">
    <location>
        <begin position="554"/>
        <end position="596"/>
    </location>
</feature>
<feature type="region of interest" description="Disordered" evidence="7">
    <location>
        <begin position="456"/>
        <end position="477"/>
    </location>
</feature>
<feature type="active site" description="Schiff-base intermediate with DNA; via amino nitrogen" evidence="5">
    <location>
        <position position="2"/>
    </location>
</feature>
<feature type="binding site" evidence="1">
    <location>
        <position position="192"/>
    </location>
    <ligand>
        <name>DNA</name>
        <dbReference type="ChEBI" id="CHEBI:16991"/>
    </ligand>
</feature>
<feature type="binding site" evidence="1">
    <location>
        <position position="271"/>
    </location>
    <ligand>
        <name>DNA</name>
        <dbReference type="ChEBI" id="CHEBI:16991"/>
    </ligand>
</feature>
<feature type="binding site" evidence="6">
    <location>
        <position position="507"/>
    </location>
    <ligand>
        <name>Zn(2+)</name>
        <dbReference type="ChEBI" id="CHEBI:29105"/>
        <label>1</label>
    </ligand>
</feature>
<feature type="binding site" evidence="6">
    <location>
        <position position="510"/>
    </location>
    <ligand>
        <name>Zn(2+)</name>
        <dbReference type="ChEBI" id="CHEBI:29105"/>
        <label>1</label>
    </ligand>
</feature>
<feature type="binding site" evidence="6">
    <location>
        <position position="533"/>
    </location>
    <ligand>
        <name>Zn(2+)</name>
        <dbReference type="ChEBI" id="CHEBI:29105"/>
        <label>1</label>
    </ligand>
</feature>
<feature type="binding site" evidence="6">
    <location>
        <position position="541"/>
    </location>
    <ligand>
        <name>Zn(2+)</name>
        <dbReference type="ChEBI" id="CHEBI:29105"/>
        <label>1</label>
    </ligand>
</feature>
<feature type="binding site" evidence="6">
    <location>
        <position position="554"/>
    </location>
    <ligand>
        <name>Zn(2+)</name>
        <dbReference type="ChEBI" id="CHEBI:29105"/>
        <label>2</label>
    </ligand>
</feature>
<feature type="binding site" evidence="6">
    <location>
        <position position="556"/>
    </location>
    <ligand>
        <name>Zn(2+)</name>
        <dbReference type="ChEBI" id="CHEBI:29105"/>
        <label>2</label>
    </ligand>
</feature>
<feature type="binding site" evidence="6">
    <location>
        <position position="579"/>
    </location>
    <ligand>
        <name>Zn(2+)</name>
        <dbReference type="ChEBI" id="CHEBI:29105"/>
        <label>2</label>
    </ligand>
</feature>
<feature type="binding site" evidence="6">
    <location>
        <position position="587"/>
    </location>
    <ligand>
        <name>Zn(2+)</name>
        <dbReference type="ChEBI" id="CHEBI:29105"/>
        <label>2</label>
    </ligand>
</feature>
<feature type="site" description="Important for monofunctional glycosylase activity">
    <location>
        <position position="2"/>
    </location>
</feature>
<feature type="site" description="Required for glycosylase and lyase activities">
    <location>
        <position position="81"/>
    </location>
</feature>
<feature type="modified residue" description="Phosphoserine" evidence="20">
    <location>
        <position position="450"/>
    </location>
</feature>
<feature type="sequence variant" id="VAR_025806" description="In dbSNP:rs34007209." evidence="18">
    <original>R</original>
    <variation>C</variation>
    <location>
        <position position="38"/>
    </location>
</feature>
<feature type="sequence variant" id="VAR_025807" evidence="18">
    <original>N</original>
    <variation>NN</variation>
    <location>
        <position position="58"/>
    </location>
</feature>
<feature type="sequence variant" id="VAR_025808" description="In dbSNP:rs34112288." evidence="18">
    <original>V</original>
    <variation>M</variation>
    <location>
        <position position="76"/>
    </location>
</feature>
<feature type="sequence variant" id="VAR_020590" description="In dbSNP:rs7689099." evidence="11 18">
    <original>P</original>
    <variation>R</variation>
    <location>
        <position position="117"/>
    </location>
</feature>
<feature type="sequence variant" id="VAR_025809" description="In dbSNP:rs17064658." evidence="18">
    <original>Q</original>
    <variation>H</variation>
    <location>
        <position position="172"/>
    </location>
</feature>
<feature type="sequence variant" id="VAR_025810" description="In dbSNP:rs34193982." evidence="18">
    <original>H</original>
    <variation>R</variation>
    <location>
        <position position="286"/>
    </location>
</feature>
<feature type="sequence variant" id="VAR_025811" description="In dbSNP:rs17064676." evidence="18">
    <original>I</original>
    <variation>V</variation>
    <location>
        <position position="346"/>
    </location>
</feature>
<feature type="sequence variant" id="VAR_020591" description="In dbSNP:rs13112358." evidence="8 10 11 18">
    <original>P</original>
    <variation>L</variation>
    <location>
        <position position="443"/>
    </location>
</feature>
<feature type="sequence variant" id="VAR_025812" description="In dbSNP:rs13112390." evidence="8 10 11 18">
    <original>Q</original>
    <variation>H</variation>
    <location>
        <position position="471"/>
    </location>
</feature>
<feature type="sequence variant" id="VAR_020592" description="In dbSNP:rs1876268." evidence="8 10 11 18">
    <original>G</original>
    <variation>R</variation>
    <location>
        <position position="520"/>
    </location>
</feature>
<feature type="sequence variant" id="VAR_025813" description="In dbSNP:rs36005630." evidence="18">
    <original>A</original>
    <variation>S</variation>
    <location>
        <position position="547"/>
    </location>
</feature>
<feature type="sequence variant" id="VAR_025814" description="In dbSNP:rs35418725." evidence="18">
    <original>H</original>
    <variation>R</variation>
    <location>
        <position position="556"/>
    </location>
</feature>
<feature type="mutagenesis site" description="No effect on AP lyase activity. Impairs monofunctional glycosylase activity." evidence="13 17">
    <original>V</original>
    <variation>P</variation>
    <location>
        <position position="2"/>
    </location>
</feature>
<feature type="mutagenesis site" description="No effect on AP lyase activity." evidence="13">
    <original>E</original>
    <variation>A</variation>
    <location>
        <position position="3"/>
    </location>
</feature>
<feature type="mutagenesis site" description="Loss of glycosylase and lyase activities." evidence="17">
    <original>K</original>
    <variation>A</variation>
    <location>
        <position position="81"/>
    </location>
</feature>
<feature type="mutagenesis site" description="Abolishes AP lyase activity." evidence="13">
    <original>C</original>
    <variation>S</variation>
    <location>
        <position position="276"/>
    </location>
</feature>
<feature type="mutagenesis site" description="Abolishes AP lyase activity." evidence="13">
    <original>C</original>
    <variation>S</variation>
    <location>
        <position position="279"/>
    </location>
</feature>
<feature type="sequence conflict" description="In Ref. 2; BAA91860." evidence="19" ref="2">
    <original>L</original>
    <variation>P</variation>
    <location>
        <position position="35"/>
    </location>
</feature>
<feature type="strand" evidence="21">
    <location>
        <begin position="508"/>
        <end position="510"/>
    </location>
</feature>
<feature type="strand" evidence="21">
    <location>
        <begin position="515"/>
        <end position="518"/>
    </location>
</feature>
<feature type="strand" evidence="21">
    <location>
        <begin position="521"/>
        <end position="523"/>
    </location>
</feature>
<feature type="turn" evidence="21">
    <location>
        <begin position="524"/>
        <end position="527"/>
    </location>
</feature>
<feature type="strand" evidence="21">
    <location>
        <begin position="529"/>
        <end position="532"/>
    </location>
</feature>
<feature type="turn" evidence="21">
    <location>
        <begin position="537"/>
        <end position="539"/>
    </location>
</feature>
<feature type="strand" evidence="21">
    <location>
        <begin position="544"/>
        <end position="547"/>
    </location>
</feature>
<feature type="helix" evidence="21">
    <location>
        <begin position="548"/>
        <end position="550"/>
    </location>
</feature>
<feature type="strand" evidence="21">
    <location>
        <begin position="557"/>
        <end position="559"/>
    </location>
</feature>
<feature type="strand" evidence="21">
    <location>
        <begin position="561"/>
        <end position="564"/>
    </location>
</feature>
<feature type="turn" evidence="21">
    <location>
        <begin position="570"/>
        <end position="573"/>
    </location>
</feature>
<feature type="strand" evidence="21">
    <location>
        <begin position="575"/>
        <end position="578"/>
    </location>
</feature>
<feature type="helix" evidence="21">
    <location>
        <begin position="583"/>
        <end position="585"/>
    </location>
</feature>
<feature type="strand" evidence="21">
    <location>
        <begin position="590"/>
        <end position="592"/>
    </location>
</feature>
<dbReference type="EC" id="3.2.2.-"/>
<dbReference type="EC" id="4.2.99.18" evidence="16"/>
<dbReference type="EMBL" id="AB079071">
    <property type="protein sequence ID" value="BAC06479.1"/>
    <property type="molecule type" value="mRNA"/>
</dbReference>
<dbReference type="EMBL" id="AK001720">
    <property type="protein sequence ID" value="BAA91860.1"/>
    <property type="molecule type" value="mRNA"/>
</dbReference>
<dbReference type="EMBL" id="DQ310721">
    <property type="protein sequence ID" value="ABC40719.1"/>
    <property type="molecule type" value="Genomic_DNA"/>
</dbReference>
<dbReference type="EMBL" id="AC027627">
    <property type="status" value="NOT_ANNOTATED_CDS"/>
    <property type="molecule type" value="Genomic_DNA"/>
</dbReference>
<dbReference type="EMBL" id="BC025954">
    <property type="protein sequence ID" value="AAH25954.1"/>
    <property type="molecule type" value="mRNA"/>
</dbReference>
<dbReference type="CCDS" id="CCDS3828.1"/>
<dbReference type="RefSeq" id="NP_060718.3">
    <property type="nucleotide sequence ID" value="NM_018248.3"/>
</dbReference>
<dbReference type="RefSeq" id="XP_047271850.1">
    <property type="nucleotide sequence ID" value="XM_047415894.1"/>
</dbReference>
<dbReference type="PDB" id="7JL5">
    <property type="method" value="X-ray"/>
    <property type="resolution" value="2.60 A"/>
    <property type="chains" value="A/B=501-605"/>
</dbReference>
<dbReference type="PDB" id="7TMY">
    <property type="method" value="X-ray"/>
    <property type="resolution" value="2.21 A"/>
    <property type="chains" value="A=462-469"/>
</dbReference>
<dbReference type="PDBsum" id="7JL5"/>
<dbReference type="PDBsum" id="7TMY"/>
<dbReference type="SMR" id="Q8TAT5"/>
<dbReference type="BioGRID" id="120538">
    <property type="interactions" value="96"/>
</dbReference>
<dbReference type="FunCoup" id="Q8TAT5">
    <property type="interactions" value="1716"/>
</dbReference>
<dbReference type="IntAct" id="Q8TAT5">
    <property type="interactions" value="30"/>
</dbReference>
<dbReference type="MINT" id="Q8TAT5"/>
<dbReference type="STRING" id="9606.ENSP00000264596"/>
<dbReference type="GlyGen" id="Q8TAT5">
    <property type="glycosylation" value="4 sites, 1 O-linked glycan (3 sites)"/>
</dbReference>
<dbReference type="iPTMnet" id="Q8TAT5"/>
<dbReference type="PhosphoSitePlus" id="Q8TAT5"/>
<dbReference type="BioMuta" id="NEIL3"/>
<dbReference type="DMDM" id="302393810"/>
<dbReference type="jPOST" id="Q8TAT5"/>
<dbReference type="MassIVE" id="Q8TAT5"/>
<dbReference type="PaxDb" id="9606-ENSP00000264596"/>
<dbReference type="PeptideAtlas" id="Q8TAT5"/>
<dbReference type="ProteomicsDB" id="73916"/>
<dbReference type="Antibodypedia" id="17262">
    <property type="antibodies" value="179 antibodies from 30 providers"/>
</dbReference>
<dbReference type="DNASU" id="55247"/>
<dbReference type="Ensembl" id="ENST00000264596.4">
    <property type="protein sequence ID" value="ENSP00000264596.3"/>
    <property type="gene ID" value="ENSG00000109674.4"/>
</dbReference>
<dbReference type="GeneID" id="55247"/>
<dbReference type="KEGG" id="hsa:55247"/>
<dbReference type="MANE-Select" id="ENST00000264596.4">
    <property type="protein sequence ID" value="ENSP00000264596.3"/>
    <property type="RefSeq nucleotide sequence ID" value="NM_018248.3"/>
    <property type="RefSeq protein sequence ID" value="NP_060718.3"/>
</dbReference>
<dbReference type="UCSC" id="uc003iut.3">
    <property type="organism name" value="human"/>
</dbReference>
<dbReference type="AGR" id="HGNC:24573"/>
<dbReference type="CTD" id="55247"/>
<dbReference type="DisGeNET" id="55247"/>
<dbReference type="GeneCards" id="NEIL3"/>
<dbReference type="HGNC" id="HGNC:24573">
    <property type="gene designation" value="NEIL3"/>
</dbReference>
<dbReference type="HPA" id="ENSG00000109674">
    <property type="expression patterns" value="Group enriched (bone marrow, lymphoid tissue)"/>
</dbReference>
<dbReference type="MIM" id="608934">
    <property type="type" value="gene"/>
</dbReference>
<dbReference type="neXtProt" id="NX_Q8TAT5"/>
<dbReference type="OpenTargets" id="ENSG00000109674"/>
<dbReference type="PharmGKB" id="PA134889634"/>
<dbReference type="VEuPathDB" id="HostDB:ENSG00000109674"/>
<dbReference type="eggNOG" id="ENOG502QWRN">
    <property type="taxonomic scope" value="Eukaryota"/>
</dbReference>
<dbReference type="GeneTree" id="ENSGT00940000153230"/>
<dbReference type="HOGENOM" id="CLU_482283_0_0_1"/>
<dbReference type="InParanoid" id="Q8TAT5"/>
<dbReference type="OMA" id="GMKGSVM"/>
<dbReference type="OrthoDB" id="498125at2759"/>
<dbReference type="PAN-GO" id="Q8TAT5">
    <property type="GO annotations" value="3 GO annotations based on evolutionary models"/>
</dbReference>
<dbReference type="PhylomeDB" id="Q8TAT5"/>
<dbReference type="TreeFam" id="TF331502"/>
<dbReference type="PathwayCommons" id="Q8TAT5"/>
<dbReference type="Reactome" id="R-HSA-110328">
    <property type="pathway name" value="Recognition and association of DNA glycosylase with site containing an affected pyrimidine"/>
</dbReference>
<dbReference type="Reactome" id="R-HSA-110329">
    <property type="pathway name" value="Cleavage of the damaged pyrimidine"/>
</dbReference>
<dbReference type="Reactome" id="R-HSA-110330">
    <property type="pathway name" value="Recognition and association of DNA glycosylase with site containing an affected purine"/>
</dbReference>
<dbReference type="Reactome" id="R-HSA-110331">
    <property type="pathway name" value="Cleavage of the damaged purine"/>
</dbReference>
<dbReference type="Reactome" id="R-HSA-9629232">
    <property type="pathway name" value="Defective Base Excision Repair Associated with NEIL3"/>
</dbReference>
<dbReference type="Reactome" id="R-HSA-9636003">
    <property type="pathway name" value="NEIL3-mediated resolution of ICLs"/>
</dbReference>
<dbReference type="SignaLink" id="Q8TAT5"/>
<dbReference type="SIGNOR" id="Q8TAT5"/>
<dbReference type="BioGRID-ORCS" id="55247">
    <property type="hits" value="8 hits in 1162 CRISPR screens"/>
</dbReference>
<dbReference type="ChiTaRS" id="NEIL3">
    <property type="organism name" value="human"/>
</dbReference>
<dbReference type="GeneWiki" id="NEIL3_(gene)"/>
<dbReference type="GenomeRNAi" id="55247"/>
<dbReference type="Pharos" id="Q8TAT5">
    <property type="development level" value="Tbio"/>
</dbReference>
<dbReference type="PRO" id="PR:Q8TAT5"/>
<dbReference type="Proteomes" id="UP000005640">
    <property type="component" value="Chromosome 4"/>
</dbReference>
<dbReference type="RNAct" id="Q8TAT5">
    <property type="molecule type" value="protein"/>
</dbReference>
<dbReference type="Bgee" id="ENSG00000109674">
    <property type="expression patterns" value="Expressed in primordial germ cell in gonad and 91 other cell types or tissues"/>
</dbReference>
<dbReference type="ExpressionAtlas" id="Q8TAT5">
    <property type="expression patterns" value="baseline and differential"/>
</dbReference>
<dbReference type="GO" id="GO:0005694">
    <property type="term" value="C:chromosome"/>
    <property type="evidence" value="ECO:0007669"/>
    <property type="project" value="UniProtKB-SubCell"/>
</dbReference>
<dbReference type="GO" id="GO:0005654">
    <property type="term" value="C:nucleoplasm"/>
    <property type="evidence" value="ECO:0000314"/>
    <property type="project" value="HPA"/>
</dbReference>
<dbReference type="GO" id="GO:0005634">
    <property type="term" value="C:nucleus"/>
    <property type="evidence" value="ECO:0000314"/>
    <property type="project" value="UniProtKB"/>
</dbReference>
<dbReference type="GO" id="GO:0000405">
    <property type="term" value="F:bubble DNA binding"/>
    <property type="evidence" value="ECO:0000250"/>
    <property type="project" value="UniProtKB"/>
</dbReference>
<dbReference type="GO" id="GO:0140078">
    <property type="term" value="F:class I DNA-(apurinic or apyrimidinic site) endonuclease activity"/>
    <property type="evidence" value="ECO:0007669"/>
    <property type="project" value="UniProtKB-EC"/>
</dbReference>
<dbReference type="GO" id="GO:0003684">
    <property type="term" value="F:damaged DNA binding"/>
    <property type="evidence" value="ECO:0000250"/>
    <property type="project" value="UniProtKB"/>
</dbReference>
<dbReference type="GO" id="GO:0019104">
    <property type="term" value="F:DNA N-glycosylase activity"/>
    <property type="evidence" value="ECO:0000314"/>
    <property type="project" value="HGNC"/>
</dbReference>
<dbReference type="GO" id="GO:0003906">
    <property type="term" value="F:DNA-(apurinic or apyrimidinic site) endonuclease activity"/>
    <property type="evidence" value="ECO:0000314"/>
    <property type="project" value="UniProtKB"/>
</dbReference>
<dbReference type="GO" id="GO:0003690">
    <property type="term" value="F:double-stranded DNA binding"/>
    <property type="evidence" value="ECO:0000250"/>
    <property type="project" value="UniProtKB"/>
</dbReference>
<dbReference type="GO" id="GO:1904931">
    <property type="term" value="F:MCM complex binding"/>
    <property type="evidence" value="ECO:0000250"/>
    <property type="project" value="UniProtKB"/>
</dbReference>
<dbReference type="GO" id="GO:0003697">
    <property type="term" value="F:single-stranded DNA binding"/>
    <property type="evidence" value="ECO:0000314"/>
    <property type="project" value="UniProtKB"/>
</dbReference>
<dbReference type="GO" id="GO:0008270">
    <property type="term" value="F:zinc ion binding"/>
    <property type="evidence" value="ECO:0007669"/>
    <property type="project" value="UniProtKB-KW"/>
</dbReference>
<dbReference type="GO" id="GO:0006284">
    <property type="term" value="P:base-excision repair"/>
    <property type="evidence" value="ECO:0000314"/>
    <property type="project" value="HGNC"/>
</dbReference>
<dbReference type="GO" id="GO:0006285">
    <property type="term" value="P:base-excision repair, AP site formation"/>
    <property type="evidence" value="ECO:0000304"/>
    <property type="project" value="Reactome"/>
</dbReference>
<dbReference type="GO" id="GO:0045007">
    <property type="term" value="P:depurination"/>
    <property type="evidence" value="ECO:0000304"/>
    <property type="project" value="Reactome"/>
</dbReference>
<dbReference type="GO" id="GO:0036297">
    <property type="term" value="P:interstrand cross-link repair"/>
    <property type="evidence" value="ECO:0000250"/>
    <property type="project" value="UniProtKB"/>
</dbReference>
<dbReference type="GO" id="GO:0000012">
    <property type="term" value="P:single strand break repair"/>
    <property type="evidence" value="ECO:0000314"/>
    <property type="project" value="ARUK-UCL"/>
</dbReference>
<dbReference type="CDD" id="cd08969">
    <property type="entry name" value="MeNeil3_N"/>
    <property type="match status" value="1"/>
</dbReference>
<dbReference type="FunFam" id="2.30.30.380:FF:000017">
    <property type="entry name" value="Nei like DNA glycosylase 3"/>
    <property type="match status" value="1"/>
</dbReference>
<dbReference type="FunFam" id="3.20.190.10:FF:000005">
    <property type="entry name" value="Nei like DNA glycosylase 3"/>
    <property type="match status" value="1"/>
</dbReference>
<dbReference type="FunFam" id="1.10.8.50:FF:000008">
    <property type="entry name" value="Nei-like DNA glycosylase 3"/>
    <property type="match status" value="1"/>
</dbReference>
<dbReference type="Gene3D" id="1.10.8.50">
    <property type="match status" value="1"/>
</dbReference>
<dbReference type="Gene3D" id="3.20.190.10">
    <property type="entry name" value="MutM-like, N-terminal"/>
    <property type="match status" value="1"/>
</dbReference>
<dbReference type="Gene3D" id="2.30.30.380">
    <property type="entry name" value="Zn-finger domain of Sec23/24"/>
    <property type="match status" value="1"/>
</dbReference>
<dbReference type="InterPro" id="IPR015886">
    <property type="entry name" value="DNA_glyclase/AP_lyase_DNA-bd"/>
</dbReference>
<dbReference type="InterPro" id="IPR015887">
    <property type="entry name" value="DNA_glyclase_Znf_dom_DNA_BS"/>
</dbReference>
<dbReference type="InterPro" id="IPR012319">
    <property type="entry name" value="FPG_cat"/>
</dbReference>
<dbReference type="InterPro" id="IPR035937">
    <property type="entry name" value="MutM-like_N-ter"/>
</dbReference>
<dbReference type="InterPro" id="IPR010979">
    <property type="entry name" value="Ribosomal_uS13-like_H2TH"/>
</dbReference>
<dbReference type="InterPro" id="IPR000214">
    <property type="entry name" value="Znf_DNA_glyclase/AP_lyase"/>
</dbReference>
<dbReference type="InterPro" id="IPR010666">
    <property type="entry name" value="Znf_GRF"/>
</dbReference>
<dbReference type="InterPro" id="IPR001876">
    <property type="entry name" value="Znf_RanBP2"/>
</dbReference>
<dbReference type="InterPro" id="IPR036443">
    <property type="entry name" value="Znf_RanBP2_sf"/>
</dbReference>
<dbReference type="PANTHER" id="PTHR22993:SF10">
    <property type="entry name" value="ENDONUCLEASE 8-LIKE 3"/>
    <property type="match status" value="1"/>
</dbReference>
<dbReference type="PANTHER" id="PTHR22993">
    <property type="entry name" value="FORMAMIDOPYRIMIDINE-DNA GLYCOSYLASE"/>
    <property type="match status" value="1"/>
</dbReference>
<dbReference type="Pfam" id="PF06831">
    <property type="entry name" value="H2TH"/>
    <property type="match status" value="1"/>
</dbReference>
<dbReference type="Pfam" id="PF06839">
    <property type="entry name" value="Zn_ribbon_GRF"/>
    <property type="match status" value="2"/>
</dbReference>
<dbReference type="Pfam" id="PF00641">
    <property type="entry name" value="Zn_ribbon_RanBP"/>
    <property type="match status" value="1"/>
</dbReference>
<dbReference type="SMART" id="SM01232">
    <property type="entry name" value="H2TH"/>
    <property type="match status" value="1"/>
</dbReference>
<dbReference type="SMART" id="SM00547">
    <property type="entry name" value="ZnF_RBZ"/>
    <property type="match status" value="1"/>
</dbReference>
<dbReference type="SUPFAM" id="SSF81624">
    <property type="entry name" value="N-terminal domain of MutM-like DNA repair proteins"/>
    <property type="match status" value="1"/>
</dbReference>
<dbReference type="SUPFAM" id="SSF90209">
    <property type="entry name" value="Ran binding protein zinc finger-like"/>
    <property type="match status" value="1"/>
</dbReference>
<dbReference type="SUPFAM" id="SSF46946">
    <property type="entry name" value="S13-like H2TH domain"/>
    <property type="match status" value="1"/>
</dbReference>
<dbReference type="PROSITE" id="PS51068">
    <property type="entry name" value="FPG_CAT"/>
    <property type="match status" value="1"/>
</dbReference>
<dbReference type="PROSITE" id="PS01242">
    <property type="entry name" value="ZF_FPG_1"/>
    <property type="match status" value="1"/>
</dbReference>
<dbReference type="PROSITE" id="PS51066">
    <property type="entry name" value="ZF_FPG_2"/>
    <property type="match status" value="1"/>
</dbReference>
<dbReference type="PROSITE" id="PS51999">
    <property type="entry name" value="ZF_GRF"/>
    <property type="match status" value="2"/>
</dbReference>
<dbReference type="PROSITE" id="PS01358">
    <property type="entry name" value="ZF_RANBP2_1"/>
    <property type="match status" value="1"/>
</dbReference>
<dbReference type="PROSITE" id="PS50199">
    <property type="entry name" value="ZF_RANBP2_2"/>
    <property type="match status" value="1"/>
</dbReference>
<evidence type="ECO:0000250" key="1"/>
<evidence type="ECO:0000250" key="2">
    <source>
        <dbReference type="UniProtKB" id="A0A1L8HU22"/>
    </source>
</evidence>
<evidence type="ECO:0000255" key="3">
    <source>
        <dbReference type="PROSITE-ProRule" id="PRU00322"/>
    </source>
</evidence>
<evidence type="ECO:0000255" key="4">
    <source>
        <dbReference type="PROSITE-ProRule" id="PRU00391"/>
    </source>
</evidence>
<evidence type="ECO:0000255" key="5">
    <source>
        <dbReference type="PROSITE-ProRule" id="PRU00392"/>
    </source>
</evidence>
<evidence type="ECO:0000255" key="6">
    <source>
        <dbReference type="PROSITE-ProRule" id="PRU01343"/>
    </source>
</evidence>
<evidence type="ECO:0000256" key="7">
    <source>
        <dbReference type="SAM" id="MobiDB-lite"/>
    </source>
</evidence>
<evidence type="ECO:0000269" key="8">
    <source>
    </source>
</evidence>
<evidence type="ECO:0000269" key="9">
    <source>
    </source>
</evidence>
<evidence type="ECO:0000269" key="10">
    <source>
    </source>
</evidence>
<evidence type="ECO:0000269" key="11">
    <source>
    </source>
</evidence>
<evidence type="ECO:0000269" key="12">
    <source>
    </source>
</evidence>
<evidence type="ECO:0000269" key="13">
    <source>
    </source>
</evidence>
<evidence type="ECO:0000269" key="14">
    <source>
    </source>
</evidence>
<evidence type="ECO:0000269" key="15">
    <source>
    </source>
</evidence>
<evidence type="ECO:0000269" key="16">
    <source>
    </source>
</evidence>
<evidence type="ECO:0000269" key="17">
    <source>
    </source>
</evidence>
<evidence type="ECO:0000269" key="18">
    <source ref="3"/>
</evidence>
<evidence type="ECO:0000305" key="19"/>
<evidence type="ECO:0007744" key="20">
    <source>
    </source>
</evidence>
<evidence type="ECO:0007829" key="21">
    <source>
        <dbReference type="PDB" id="7JL5"/>
    </source>
</evidence>
<name>NEIL3_HUMAN</name>
<sequence>MVEGPGCTLNGEKIRARVLPGQAVTGVRGSALRSLQGRALRLAASTVVVSPQAAALNNDSSQNVLSLFNGYVYSGVETLGKELFMYFGPKALRIHFGMKGFIMINPLEYKYKNGASPVLEVQLTKDLICFFDSSVELRNSMESQQRIRMMKELDVCSPEFSFLRAESEVKKQKGRMLGDVLMDQNVLPGVGNIIKNEALFDSGLHPAVKVCQLTDEQIHHLMKMIRDFSILFYRCRKAGLALSKHYKVYKRPNCGQCHCRITVCRFGDNNRMTYFCPHCQKENPQHVDICKLPTRNTIISWTSSRVDHVMDSVARKSEEHWTCVVCTLINKPSSKACDACLTSRPIDSVLKSEENSTVFSHLMKYPCNTFGKPHTEVKINRKTAFGTTTLVLTDFSNKSSTLERKTKQNQILDEEFQNSPPASVCLNDIQHPSKKTTNDITQPSSKVNISPTISSESKLFSPAHKKPKTAQYSSPELKSCNPGYSNSELQINMTDGPRTLNPDSPRCSKHNRLCILRVVGKDGENKGRQFYACPLPREAQCGFFEWADLSFPFCNHGKRSTMKTVLKIGPNNGKNFFVCPLGKEKQCNFFQWAENGPGIKIIPGC</sequence>
<gene>
    <name type="primary">NEIL3</name>
</gene>
<accession>Q8TAT5</accession>
<accession>Q2PPJ3</accession>
<accession>Q8NG51</accession>
<accession>Q9NV95</accession>
<organism>
    <name type="scientific">Homo sapiens</name>
    <name type="common">Human</name>
    <dbReference type="NCBI Taxonomy" id="9606"/>
    <lineage>
        <taxon>Eukaryota</taxon>
        <taxon>Metazoa</taxon>
        <taxon>Chordata</taxon>
        <taxon>Craniata</taxon>
        <taxon>Vertebrata</taxon>
        <taxon>Euteleostomi</taxon>
        <taxon>Mammalia</taxon>
        <taxon>Eutheria</taxon>
        <taxon>Euarchontoglires</taxon>
        <taxon>Primates</taxon>
        <taxon>Haplorrhini</taxon>
        <taxon>Catarrhini</taxon>
        <taxon>Hominidae</taxon>
        <taxon>Homo</taxon>
    </lineage>
</organism>
<proteinExistence type="evidence at protein level"/>
<protein>
    <recommendedName>
        <fullName>Endonuclease 8-like 3</fullName>
        <ecNumber>3.2.2.-</ecNumber>
        <ecNumber evidence="16">4.2.99.18</ecNumber>
    </recommendedName>
    <alternativeName>
        <fullName>DNA glycosylase FPG2</fullName>
    </alternativeName>
    <alternativeName>
        <fullName>DNA glycosylase/AP lyase Neil3</fullName>
    </alternativeName>
    <alternativeName>
        <fullName>Endonuclease VIII-like 3</fullName>
    </alternativeName>
    <alternativeName>
        <fullName>Nei-like protein 3</fullName>
    </alternativeName>
</protein>
<comment type="function">
    <text evidence="2 9 13 16 17">DNA glycosylase which prefers single-stranded DNA (ssDNA), or partially ssDNA structures such as bubble and fork structures, to double-stranded DNA (dsDNA) (PubMed:12433996, PubMed:19170771, PubMed:22569481, PubMed:23755964). Mediates interstrand cross-link repair in response to replication stress: acts by mediating DNA glycosylase activity, cleaving one of the two N-glycosyl bonds comprising the interstrand cross-link, which avoids the formation of a double-strand break but generates an abasic site that is bypassed by translesion synthesis polymerases (By similarity). In vitro, displays strong glycosylase activity towards the hydantoin lesions spiroiminodihydantoin (Sp) and guanidinohydantoin (Gh) in both ssDNA and dsDNA; also recognizes FapyA, FapyG, 5-OHU, 5-OHC, 5-OHMH, Tg and 8-oxoA lesions in ssDNA (PubMed:12433996, PubMed:19170771, PubMed:22569481, PubMed:23755964). No activity on 8-oxoG detected (PubMed:12433996, PubMed:19170771, PubMed:22569481, PubMed:23755964). Also shows weak DNA-(apurinic or apyrimidinic site) lyase activity (PubMed:12433996, PubMed:19170771, PubMed:22569481, PubMed:23755964). In vivo, appears to be the primary enzyme involved in removing Sp and Gh from ssDNA in neonatal tissues (PubMed:12433996, PubMed:19170771, PubMed:22569481, PubMed:23755964).</text>
</comment>
<comment type="catalytic activity">
    <reaction evidence="5 16">
        <text>2'-deoxyribonucleotide-(2'-deoxyribose 5'-phosphate)-2'-deoxyribonucleotide-DNA = a 3'-end 2'-deoxyribonucleotide-(2,3-dehydro-2,3-deoxyribose 5'-phosphate)-DNA + a 5'-end 5'-phospho-2'-deoxyribonucleoside-DNA + H(+)</text>
        <dbReference type="Rhea" id="RHEA:66592"/>
        <dbReference type="Rhea" id="RHEA-COMP:13180"/>
        <dbReference type="Rhea" id="RHEA-COMP:16897"/>
        <dbReference type="Rhea" id="RHEA-COMP:17067"/>
        <dbReference type="ChEBI" id="CHEBI:15378"/>
        <dbReference type="ChEBI" id="CHEBI:136412"/>
        <dbReference type="ChEBI" id="CHEBI:157695"/>
        <dbReference type="ChEBI" id="CHEBI:167181"/>
        <dbReference type="EC" id="4.2.99.18"/>
    </reaction>
</comment>
<comment type="subcellular location">
    <subcellularLocation>
        <location evidence="9">Nucleus</location>
    </subcellularLocation>
    <subcellularLocation>
        <location evidence="2">Chromosome</location>
    </subcellularLocation>
    <text evidence="2">Recruited to replication stress sites via interaction with ubiquitinated CMG helicase.</text>
</comment>
<comment type="tissue specificity">
    <text evidence="9 12 14 15">Expressed in keratinocytes and embryonic fibroblasts (at protein level). Also detected in thymus, testis and fetal lung primary fibroblasts.</text>
</comment>
<comment type="developmental stage">
    <text evidence="15">Up-regulated during early S phase of the cell cycle, and sustained through G/M phase. Low expression levels in quiescent cells.</text>
</comment>
<comment type="domain">
    <text evidence="1">The N-terminal region (2-281) contains the glycosylase and lyase activities.</text>
</comment>
<comment type="domain">
    <text evidence="2">The RanBP2-type zinc-finger, also named NZF zinc finger, recognizes and binds ubiquitinated CMG helicase complex. The GRF-type zinc-fingers recognize single-stranded DNA (ssDNA), possibly on the lagging strand template.</text>
</comment>
<comment type="similarity">
    <text evidence="5">Belongs to the FPG family.</text>
</comment>
<comment type="caution">
    <text evidence="19">Was originally thought to be inactive as a glycosylase (PMID:12200441,PMID:19121397), but recent reports (PMID:22569481, PMID:20185759) demonstrate that cleavage of the initiator methionine is essential for catalytic activity.</text>
</comment>
<reference key="1">
    <citation type="journal article" date="2002" name="J. Biol. Chem.">
        <title>A back-up glycosylase in Nth1 knock-out mice is a functional Nei (endonuclease VIII) homologue.</title>
        <authorList>
            <person name="Takao M."/>
            <person name="Kanno S."/>
            <person name="Kobayashi K."/>
            <person name="Zhang Q.-M."/>
            <person name="Yonei S."/>
            <person name="van der Horst G.T.J."/>
            <person name="Yasui A."/>
        </authorList>
    </citation>
    <scope>NUCLEOTIDE SEQUENCE [MRNA]</scope>
    <scope>VARIANTS LEU-443; HIS-471 AND ARG-520</scope>
    <source>
        <tissue>Skin</tissue>
    </source>
</reference>
<reference key="2">
    <citation type="journal article" date="2004" name="Nat. Genet.">
        <title>Complete sequencing and characterization of 21,243 full-length human cDNAs.</title>
        <authorList>
            <person name="Ota T."/>
            <person name="Suzuki Y."/>
            <person name="Nishikawa T."/>
            <person name="Otsuki T."/>
            <person name="Sugiyama T."/>
            <person name="Irie R."/>
            <person name="Wakamatsu A."/>
            <person name="Hayashi K."/>
            <person name="Sato H."/>
            <person name="Nagai K."/>
            <person name="Kimura K."/>
            <person name="Makita H."/>
            <person name="Sekine M."/>
            <person name="Obayashi M."/>
            <person name="Nishi T."/>
            <person name="Shibahara T."/>
            <person name="Tanaka T."/>
            <person name="Ishii S."/>
            <person name="Yamamoto J."/>
            <person name="Saito K."/>
            <person name="Kawai Y."/>
            <person name="Isono Y."/>
            <person name="Nakamura Y."/>
            <person name="Nagahari K."/>
            <person name="Murakami K."/>
            <person name="Yasuda T."/>
            <person name="Iwayanagi T."/>
            <person name="Wagatsuma M."/>
            <person name="Shiratori A."/>
            <person name="Sudo H."/>
            <person name="Hosoiri T."/>
            <person name="Kaku Y."/>
            <person name="Kodaira H."/>
            <person name="Kondo H."/>
            <person name="Sugawara M."/>
            <person name="Takahashi M."/>
            <person name="Kanda K."/>
            <person name="Yokoi T."/>
            <person name="Furuya T."/>
            <person name="Kikkawa E."/>
            <person name="Omura Y."/>
            <person name="Abe K."/>
            <person name="Kamihara K."/>
            <person name="Katsuta N."/>
            <person name="Sato K."/>
            <person name="Tanikawa M."/>
            <person name="Yamazaki M."/>
            <person name="Ninomiya K."/>
            <person name="Ishibashi T."/>
            <person name="Yamashita H."/>
            <person name="Murakawa K."/>
            <person name="Fujimori K."/>
            <person name="Tanai H."/>
            <person name="Kimata M."/>
            <person name="Watanabe M."/>
            <person name="Hiraoka S."/>
            <person name="Chiba Y."/>
            <person name="Ishida S."/>
            <person name="Ono Y."/>
            <person name="Takiguchi S."/>
            <person name="Watanabe S."/>
            <person name="Yosida M."/>
            <person name="Hotuta T."/>
            <person name="Kusano J."/>
            <person name="Kanehori K."/>
            <person name="Takahashi-Fujii A."/>
            <person name="Hara H."/>
            <person name="Tanase T.-O."/>
            <person name="Nomura Y."/>
            <person name="Togiya S."/>
            <person name="Komai F."/>
            <person name="Hara R."/>
            <person name="Takeuchi K."/>
            <person name="Arita M."/>
            <person name="Imose N."/>
            <person name="Musashino K."/>
            <person name="Yuuki H."/>
            <person name="Oshima A."/>
            <person name="Sasaki N."/>
            <person name="Aotsuka S."/>
            <person name="Yoshikawa Y."/>
            <person name="Matsunawa H."/>
            <person name="Ichihara T."/>
            <person name="Shiohata N."/>
            <person name="Sano S."/>
            <person name="Moriya S."/>
            <person name="Momiyama H."/>
            <person name="Satoh N."/>
            <person name="Takami S."/>
            <person name="Terashima Y."/>
            <person name="Suzuki O."/>
            <person name="Nakagawa S."/>
            <person name="Senoh A."/>
            <person name="Mizoguchi H."/>
            <person name="Goto Y."/>
            <person name="Shimizu F."/>
            <person name="Wakebe H."/>
            <person name="Hishigaki H."/>
            <person name="Watanabe T."/>
            <person name="Sugiyama A."/>
            <person name="Takemoto M."/>
            <person name="Kawakami B."/>
            <person name="Yamazaki M."/>
            <person name="Watanabe K."/>
            <person name="Kumagai A."/>
            <person name="Itakura S."/>
            <person name="Fukuzumi Y."/>
            <person name="Fujimori Y."/>
            <person name="Komiyama M."/>
            <person name="Tashiro H."/>
            <person name="Tanigami A."/>
            <person name="Fujiwara T."/>
            <person name="Ono T."/>
            <person name="Yamada K."/>
            <person name="Fujii Y."/>
            <person name="Ozaki K."/>
            <person name="Hirao M."/>
            <person name="Ohmori Y."/>
            <person name="Kawabata A."/>
            <person name="Hikiji T."/>
            <person name="Kobatake N."/>
            <person name="Inagaki H."/>
            <person name="Ikema Y."/>
            <person name="Okamoto S."/>
            <person name="Okitani R."/>
            <person name="Kawakami T."/>
            <person name="Noguchi S."/>
            <person name="Itoh T."/>
            <person name="Shigeta K."/>
            <person name="Senba T."/>
            <person name="Matsumura K."/>
            <person name="Nakajima Y."/>
            <person name="Mizuno T."/>
            <person name="Morinaga M."/>
            <person name="Sasaki M."/>
            <person name="Togashi T."/>
            <person name="Oyama M."/>
            <person name="Hata H."/>
            <person name="Watanabe M."/>
            <person name="Komatsu T."/>
            <person name="Mizushima-Sugano J."/>
            <person name="Satoh T."/>
            <person name="Shirai Y."/>
            <person name="Takahashi Y."/>
            <person name="Nakagawa K."/>
            <person name="Okumura K."/>
            <person name="Nagase T."/>
            <person name="Nomura N."/>
            <person name="Kikuchi H."/>
            <person name="Masuho Y."/>
            <person name="Yamashita R."/>
            <person name="Nakai K."/>
            <person name="Yada T."/>
            <person name="Nakamura Y."/>
            <person name="Ohara O."/>
            <person name="Isogai T."/>
            <person name="Sugano S."/>
        </authorList>
    </citation>
    <scope>NUCLEOTIDE SEQUENCE [LARGE SCALE MRNA]</scope>
    <scope>VARIANTS LEU-443; HIS-471 AND ARG-520</scope>
</reference>
<reference key="3">
    <citation type="submission" date="2005-11" db="EMBL/GenBank/DDBJ databases">
        <authorList>
            <consortium name="NIEHS SNPs program"/>
        </authorList>
    </citation>
    <scope>NUCLEOTIDE SEQUENCE [GENOMIC DNA]</scope>
    <scope>VARIANTS CYS-38; ASN-58 INS; MET-76; ARG-117; HIS-172; ARG-286; VAL-346; LEU-443; HIS-471; ARG-520; SER-547 AND ARG-556</scope>
</reference>
<reference key="4">
    <citation type="journal article" date="2005" name="Nature">
        <title>Generation and annotation of the DNA sequences of human chromosomes 2 and 4.</title>
        <authorList>
            <person name="Hillier L.W."/>
            <person name="Graves T.A."/>
            <person name="Fulton R.S."/>
            <person name="Fulton L.A."/>
            <person name="Pepin K.H."/>
            <person name="Minx P."/>
            <person name="Wagner-McPherson C."/>
            <person name="Layman D."/>
            <person name="Wylie K."/>
            <person name="Sekhon M."/>
            <person name="Becker M.C."/>
            <person name="Fewell G.A."/>
            <person name="Delehaunty K.D."/>
            <person name="Miner T.L."/>
            <person name="Nash W.E."/>
            <person name="Kremitzki C."/>
            <person name="Oddy L."/>
            <person name="Du H."/>
            <person name="Sun H."/>
            <person name="Bradshaw-Cordum H."/>
            <person name="Ali J."/>
            <person name="Carter J."/>
            <person name="Cordes M."/>
            <person name="Harris A."/>
            <person name="Isak A."/>
            <person name="van Brunt A."/>
            <person name="Nguyen C."/>
            <person name="Du F."/>
            <person name="Courtney L."/>
            <person name="Kalicki J."/>
            <person name="Ozersky P."/>
            <person name="Abbott S."/>
            <person name="Armstrong J."/>
            <person name="Belter E.A."/>
            <person name="Caruso L."/>
            <person name="Cedroni M."/>
            <person name="Cotton M."/>
            <person name="Davidson T."/>
            <person name="Desai A."/>
            <person name="Elliott G."/>
            <person name="Erb T."/>
            <person name="Fronick C."/>
            <person name="Gaige T."/>
            <person name="Haakenson W."/>
            <person name="Haglund K."/>
            <person name="Holmes A."/>
            <person name="Harkins R."/>
            <person name="Kim K."/>
            <person name="Kruchowski S.S."/>
            <person name="Strong C.M."/>
            <person name="Grewal N."/>
            <person name="Goyea E."/>
            <person name="Hou S."/>
            <person name="Levy A."/>
            <person name="Martinka S."/>
            <person name="Mead K."/>
            <person name="McLellan M.D."/>
            <person name="Meyer R."/>
            <person name="Randall-Maher J."/>
            <person name="Tomlinson C."/>
            <person name="Dauphin-Kohlberg S."/>
            <person name="Kozlowicz-Reilly A."/>
            <person name="Shah N."/>
            <person name="Swearengen-Shahid S."/>
            <person name="Snider J."/>
            <person name="Strong J.T."/>
            <person name="Thompson J."/>
            <person name="Yoakum M."/>
            <person name="Leonard S."/>
            <person name="Pearman C."/>
            <person name="Trani L."/>
            <person name="Radionenko M."/>
            <person name="Waligorski J.E."/>
            <person name="Wang C."/>
            <person name="Rock S.M."/>
            <person name="Tin-Wollam A.-M."/>
            <person name="Maupin R."/>
            <person name="Latreille P."/>
            <person name="Wendl M.C."/>
            <person name="Yang S.-P."/>
            <person name="Pohl C."/>
            <person name="Wallis J.W."/>
            <person name="Spieth J."/>
            <person name="Bieri T.A."/>
            <person name="Berkowicz N."/>
            <person name="Nelson J.O."/>
            <person name="Osborne J."/>
            <person name="Ding L."/>
            <person name="Meyer R."/>
            <person name="Sabo A."/>
            <person name="Shotland Y."/>
            <person name="Sinha P."/>
            <person name="Wohldmann P.E."/>
            <person name="Cook L.L."/>
            <person name="Hickenbotham M.T."/>
            <person name="Eldred J."/>
            <person name="Williams D."/>
            <person name="Jones T.A."/>
            <person name="She X."/>
            <person name="Ciccarelli F.D."/>
            <person name="Izaurralde E."/>
            <person name="Taylor J."/>
            <person name="Schmutz J."/>
            <person name="Myers R.M."/>
            <person name="Cox D.R."/>
            <person name="Huang X."/>
            <person name="McPherson J.D."/>
            <person name="Mardis E.R."/>
            <person name="Clifton S.W."/>
            <person name="Warren W.C."/>
            <person name="Chinwalla A.T."/>
            <person name="Eddy S.R."/>
            <person name="Marra M.A."/>
            <person name="Ovcharenko I."/>
            <person name="Furey T.S."/>
            <person name="Miller W."/>
            <person name="Eichler E.E."/>
            <person name="Bork P."/>
            <person name="Suyama M."/>
            <person name="Torrents D."/>
            <person name="Waterston R.H."/>
            <person name="Wilson R.K."/>
        </authorList>
    </citation>
    <scope>NUCLEOTIDE SEQUENCE [LARGE SCALE GENOMIC DNA]</scope>
</reference>
<reference key="5">
    <citation type="journal article" date="2004" name="Genome Res.">
        <title>The status, quality, and expansion of the NIH full-length cDNA project: the Mammalian Gene Collection (MGC).</title>
        <authorList>
            <consortium name="The MGC Project Team"/>
        </authorList>
    </citation>
    <scope>NUCLEOTIDE SEQUENCE [LARGE SCALE MRNA]</scope>
    <scope>VARIANTS ARG-117; LEU-443; HIS-471 AND ARG-520</scope>
    <source>
        <tissue>B-cell</tissue>
    </source>
</reference>
<reference key="6">
    <citation type="journal article" date="2002" name="Nucleic Acids Res.">
        <title>Human DNA glycosylases of the bacterial Fpg/MutM superfamily: an alternative pathway for the repair of 8-oxoguanine and other oxidation products in DNA.</title>
        <authorList>
            <person name="Morland I."/>
            <person name="Rolseth V."/>
            <person name="Luna L."/>
            <person name="Rognes T."/>
            <person name="Bjoeraas M."/>
            <person name="Seeberg E."/>
        </authorList>
    </citation>
    <scope>FUNCTION</scope>
    <scope>SUBCELLULAR LOCATION</scope>
    <scope>TISSUE SPECIFICITY</scope>
</reference>
<reference key="7">
    <citation type="journal article" date="2005" name="J. Biochem.">
        <title>Hematopoietic tissue-specific expression of mouse Neil3 for endonuclease VIII-like protein.</title>
        <authorList>
            <person name="Torisu K."/>
            <person name="Tsuchimoto D."/>
            <person name="Ohnishi Y."/>
            <person name="Nakabeppu Y."/>
        </authorList>
    </citation>
    <scope>TISSUE SPECIFICITY</scope>
</reference>
<reference key="8">
    <citation type="journal article" date="2009" name="BMC Neurosci.">
        <title>Expression patterns of Neil3 during embryonic brain development and neoplasia.</title>
        <authorList>
            <person name="Hildrestrand G.A."/>
            <person name="Neurauter C.G."/>
            <person name="Diep D.B."/>
            <person name="Castellanos C.G."/>
            <person name="Krauss S."/>
            <person name="Bjoras M."/>
            <person name="Luna L."/>
        </authorList>
    </citation>
    <scope>TISSUE SPECIFICITY</scope>
</reference>
<reference key="9">
    <citation type="journal article" date="2009" name="Genes Cells">
        <title>Human Nei-like protein NEIL3 has AP lyase activity specific for single-stranded DNA and confers oxidative stress resistance in Escherichia coli mutant.</title>
        <authorList>
            <person name="Takao M."/>
            <person name="Oohata Y."/>
            <person name="Kitadokoro K."/>
            <person name="Kobayashi K."/>
            <person name="Iwai S."/>
            <person name="Yasui A."/>
            <person name="Yonei S."/>
            <person name="Zhang Q.M."/>
        </authorList>
    </citation>
    <scope>FUNCTION</scope>
    <scope>MUTAGENESIS OF VAL-2; GLU-3; CYS-276 AND CYS-279</scope>
</reference>
<reference key="10">
    <citation type="journal article" date="2009" name="Protein Expr. Purif.">
        <title>Expression and purification of NEIL3, a human DNA glycosylase homolog.</title>
        <authorList>
            <person name="Krokeide S.Z."/>
            <person name="Bolstad N."/>
            <person name="Laerdahl J.K."/>
            <person name="Bjoras M."/>
            <person name="Luna L."/>
        </authorList>
    </citation>
    <scope>IDENTIFICATION BY MASS SPECTROMETRY</scope>
</reference>
<reference key="11">
    <citation type="journal article" date="2012" name="DNA Repair">
        <title>Release from quiescence stimulates the expression of human NEIL3 under the control of the Ras dependent ERK-MAP kinase pathway.</title>
        <authorList>
            <person name="Neurauter C.G."/>
            <person name="Luna L."/>
            <person name="Bjoras M."/>
        </authorList>
    </citation>
    <scope>CATALYTIC ACTIVITY</scope>
    <scope>TISSUE SPECIFICITY</scope>
    <scope>DEVELOPMENTAL STAGE</scope>
</reference>
<reference key="12">
    <citation type="journal article" date="2012" name="Protein Expr. Purif.">
        <title>Expression and purification of active mouse and human NEIL3 proteins.</title>
        <authorList>
            <person name="Liu M."/>
            <person name="Bandaru V."/>
            <person name="Holmes A."/>
            <person name="Averill A.M."/>
            <person name="Cannan W."/>
            <person name="Wallace S.S."/>
        </authorList>
    </citation>
    <scope>FUNCTION AS A GLYCOSYLASE</scope>
    <scope>CATALYTIC ACTIVITY</scope>
    <scope>PROBABLE CLEAVAGE OF INITIATOR METHIONINE</scope>
</reference>
<reference key="13">
    <citation type="journal article" date="2013" name="DNA Repair">
        <title>Human NEIL3 is mainly a monofunctional DNA glycosylase removing spiroimindiohydantoin and guanidinohydantoin.</title>
        <authorList>
            <person name="Krokeide S.Z."/>
            <person name="Laerdahl J.K."/>
            <person name="Salah M."/>
            <person name="Luna L."/>
            <person name="Cederkvist F.H."/>
            <person name="Fleming A.M."/>
            <person name="Burrows C.J."/>
            <person name="Dalhus B."/>
            <person name="Bjoras M."/>
        </authorList>
    </citation>
    <scope>FUNCTION</scope>
    <scope>CATALYTIC ACTIVITY</scope>
    <scope>PROBABLE CLEAVAGE OF INITIATOR METHIONINE</scope>
    <scope>MUTAGENESIS OF VAL-2 AND LYS-81</scope>
</reference>
<reference key="14">
    <citation type="journal article" date="2013" name="J. Proteome Res.">
        <title>Toward a comprehensive characterization of a human cancer cell phosphoproteome.</title>
        <authorList>
            <person name="Zhou H."/>
            <person name="Di Palma S."/>
            <person name="Preisinger C."/>
            <person name="Peng M."/>
            <person name="Polat A.N."/>
            <person name="Heck A.J."/>
            <person name="Mohammed S."/>
        </authorList>
    </citation>
    <scope>PHOSPHORYLATION [LARGE SCALE ANALYSIS] AT SER-450</scope>
    <scope>IDENTIFICATION BY MASS SPECTROMETRY [LARGE SCALE ANALYSIS]</scope>
    <source>
        <tissue>Cervix carcinoma</tissue>
        <tissue>Erythroleukemia</tissue>
    </source>
</reference>
<keyword id="KW-0002">3D-structure</keyword>
<keyword id="KW-0158">Chromosome</keyword>
<keyword id="KW-0227">DNA damage</keyword>
<keyword id="KW-0234">DNA repair</keyword>
<keyword id="KW-0238">DNA-binding</keyword>
<keyword id="KW-0326">Glycosidase</keyword>
<keyword id="KW-0378">Hydrolase</keyword>
<keyword id="KW-0456">Lyase</keyword>
<keyword id="KW-0479">Metal-binding</keyword>
<keyword id="KW-0511">Multifunctional enzyme</keyword>
<keyword id="KW-0539">Nucleus</keyword>
<keyword id="KW-0597">Phosphoprotein</keyword>
<keyword id="KW-1267">Proteomics identification</keyword>
<keyword id="KW-1185">Reference proteome</keyword>
<keyword id="KW-0677">Repeat</keyword>
<keyword id="KW-0862">Zinc</keyword>
<keyword id="KW-0863">Zinc-finger</keyword>